<dbReference type="EMBL" id="AM286280">
    <property type="protein sequence ID" value="CAL08337.1"/>
    <property type="molecule type" value="Genomic_DNA"/>
</dbReference>
<dbReference type="RefSeq" id="WP_003014323.1">
    <property type="nucleotide sequence ID" value="NC_008245.1"/>
</dbReference>
<dbReference type="SMR" id="Q14JC4"/>
<dbReference type="KEGG" id="ftf:FTF0321"/>
<dbReference type="HOGENOM" id="CLU_104295_1_2_6"/>
<dbReference type="GO" id="GO:0015935">
    <property type="term" value="C:small ribosomal subunit"/>
    <property type="evidence" value="ECO:0007669"/>
    <property type="project" value="InterPro"/>
</dbReference>
<dbReference type="GO" id="GO:0019843">
    <property type="term" value="F:rRNA binding"/>
    <property type="evidence" value="ECO:0007669"/>
    <property type="project" value="UniProtKB-UniRule"/>
</dbReference>
<dbReference type="GO" id="GO:0003735">
    <property type="term" value="F:structural constituent of ribosome"/>
    <property type="evidence" value="ECO:0007669"/>
    <property type="project" value="InterPro"/>
</dbReference>
<dbReference type="GO" id="GO:0000049">
    <property type="term" value="F:tRNA binding"/>
    <property type="evidence" value="ECO:0007669"/>
    <property type="project" value="UniProtKB-UniRule"/>
</dbReference>
<dbReference type="GO" id="GO:0006412">
    <property type="term" value="P:translation"/>
    <property type="evidence" value="ECO:0007669"/>
    <property type="project" value="UniProtKB-UniRule"/>
</dbReference>
<dbReference type="CDD" id="cd03368">
    <property type="entry name" value="Ribosomal_S12"/>
    <property type="match status" value="1"/>
</dbReference>
<dbReference type="FunFam" id="2.40.50.140:FF:000001">
    <property type="entry name" value="30S ribosomal protein S12"/>
    <property type="match status" value="1"/>
</dbReference>
<dbReference type="Gene3D" id="2.40.50.140">
    <property type="entry name" value="Nucleic acid-binding proteins"/>
    <property type="match status" value="1"/>
</dbReference>
<dbReference type="HAMAP" id="MF_00403_B">
    <property type="entry name" value="Ribosomal_uS12_B"/>
    <property type="match status" value="1"/>
</dbReference>
<dbReference type="InterPro" id="IPR012340">
    <property type="entry name" value="NA-bd_OB-fold"/>
</dbReference>
<dbReference type="InterPro" id="IPR006032">
    <property type="entry name" value="Ribosomal_uS12"/>
</dbReference>
<dbReference type="InterPro" id="IPR005679">
    <property type="entry name" value="Ribosomal_uS12_bac"/>
</dbReference>
<dbReference type="NCBIfam" id="TIGR00981">
    <property type="entry name" value="rpsL_bact"/>
    <property type="match status" value="1"/>
</dbReference>
<dbReference type="PANTHER" id="PTHR11652">
    <property type="entry name" value="30S RIBOSOMAL PROTEIN S12 FAMILY MEMBER"/>
    <property type="match status" value="1"/>
</dbReference>
<dbReference type="Pfam" id="PF00164">
    <property type="entry name" value="Ribosom_S12_S23"/>
    <property type="match status" value="1"/>
</dbReference>
<dbReference type="PIRSF" id="PIRSF002133">
    <property type="entry name" value="Ribosomal_S12/S23"/>
    <property type="match status" value="1"/>
</dbReference>
<dbReference type="PRINTS" id="PR01034">
    <property type="entry name" value="RIBOSOMALS12"/>
</dbReference>
<dbReference type="SUPFAM" id="SSF50249">
    <property type="entry name" value="Nucleic acid-binding proteins"/>
    <property type="match status" value="1"/>
</dbReference>
<dbReference type="PROSITE" id="PS00055">
    <property type="entry name" value="RIBOSOMAL_S12"/>
    <property type="match status" value="1"/>
</dbReference>
<protein>
    <recommendedName>
        <fullName evidence="2">Small ribosomal subunit protein uS12</fullName>
    </recommendedName>
    <alternativeName>
        <fullName evidence="4">30S ribosomal protein S12</fullName>
    </alternativeName>
</protein>
<feature type="chain" id="PRO_0000263559" description="Small ribosomal subunit protein uS12">
    <location>
        <begin position="1"/>
        <end position="124"/>
    </location>
</feature>
<feature type="region of interest" description="Disordered" evidence="3">
    <location>
        <begin position="102"/>
        <end position="124"/>
    </location>
</feature>
<feature type="compositionally biased region" description="Basic residues" evidence="3">
    <location>
        <begin position="109"/>
        <end position="124"/>
    </location>
</feature>
<feature type="modified residue" description="3-methylthioaspartic acid" evidence="1">
    <location>
        <position position="89"/>
    </location>
</feature>
<gene>
    <name evidence="2" type="primary">rpsL</name>
    <name type="ordered locus">FTF0321</name>
</gene>
<comment type="function">
    <text evidence="2">With S4 and S5 plays an important role in translational accuracy.</text>
</comment>
<comment type="function">
    <text evidence="2">Interacts with and stabilizes bases of the 16S rRNA that are involved in tRNA selection in the A site and with the mRNA backbone. Located at the interface of the 30S and 50S subunits, it traverses the body of the 30S subunit contacting proteins on the other side and probably holding the rRNA structure together. The combined cluster of proteins S8, S12 and S17 appears to hold together the shoulder and platform of the 30S subunit.</text>
</comment>
<comment type="subunit">
    <text evidence="2">Part of the 30S ribosomal subunit. Contacts proteins S8 and S17. May interact with IF1 in the 30S initiation complex.</text>
</comment>
<comment type="similarity">
    <text evidence="2">Belongs to the universal ribosomal protein uS12 family.</text>
</comment>
<accession>Q14JC4</accession>
<name>RS12_FRAT1</name>
<keyword id="KW-0488">Methylation</keyword>
<keyword id="KW-0687">Ribonucleoprotein</keyword>
<keyword id="KW-0689">Ribosomal protein</keyword>
<keyword id="KW-0694">RNA-binding</keyword>
<keyword id="KW-0699">rRNA-binding</keyword>
<keyword id="KW-0820">tRNA-binding</keyword>
<evidence type="ECO:0000250" key="1"/>
<evidence type="ECO:0000255" key="2">
    <source>
        <dbReference type="HAMAP-Rule" id="MF_00403"/>
    </source>
</evidence>
<evidence type="ECO:0000256" key="3">
    <source>
        <dbReference type="SAM" id="MobiDB-lite"/>
    </source>
</evidence>
<evidence type="ECO:0000305" key="4"/>
<organism>
    <name type="scientific">Francisella tularensis subsp. tularensis (strain FSC 198)</name>
    <dbReference type="NCBI Taxonomy" id="393115"/>
    <lineage>
        <taxon>Bacteria</taxon>
        <taxon>Pseudomonadati</taxon>
        <taxon>Pseudomonadota</taxon>
        <taxon>Gammaproteobacteria</taxon>
        <taxon>Thiotrichales</taxon>
        <taxon>Francisellaceae</taxon>
        <taxon>Francisella</taxon>
    </lineage>
</organism>
<proteinExistence type="inferred from homology"/>
<sequence>MATINQLVNNPRKRSVVKSKVPALKACPQRRGVCTRVYTTTPKKPNSALRKVARVRLTSRFEVTSYIGGEGHNLQEHSVVLIRGGRVKDLPGVRYHIVRGALDTSGVNNRKHGRSKYGTKRPKS</sequence>
<reference key="1">
    <citation type="journal article" date="2007" name="PLoS ONE">
        <title>Genome sequencing shows that European isolates of Francisella tularensis subspecies tularensis are almost identical to US laboratory strain Schu S4.</title>
        <authorList>
            <person name="Chaudhuri R.R."/>
            <person name="Ren C.-P."/>
            <person name="Desmond L."/>
            <person name="Vincent G.A."/>
            <person name="Silman N.J."/>
            <person name="Brehm J.K."/>
            <person name="Elmore M.J."/>
            <person name="Hudson M.J."/>
            <person name="Forsman M."/>
            <person name="Isherwood K.E."/>
            <person name="Gurycova D."/>
            <person name="Minton N.P."/>
            <person name="Titball R.W."/>
            <person name="Pallen M.J."/>
            <person name="Vipond R."/>
        </authorList>
    </citation>
    <scope>NUCLEOTIDE SEQUENCE [LARGE SCALE GENOMIC DNA]</scope>
    <source>
        <strain>FSC 198</strain>
    </source>
</reference>